<protein>
    <recommendedName>
        <fullName>Peroxygenase</fullName>
        <ecNumber>1.11.2.3</ecNumber>
    </recommendedName>
    <alternativeName>
        <fullName>Caleosin</fullName>
        <shortName>SiCLO</shortName>
    </alternativeName>
</protein>
<gene>
    <name evidence="9" type="primary">SOP1</name>
</gene>
<evidence type="ECO:0000250" key="1"/>
<evidence type="ECO:0000255" key="2"/>
<evidence type="ECO:0000269" key="3">
    <source>
    </source>
</evidence>
<evidence type="ECO:0000269" key="4">
    <source>
    </source>
</evidence>
<evidence type="ECO:0000269" key="5">
    <source>
    </source>
</evidence>
<evidence type="ECO:0000269" key="6">
    <source>
    </source>
</evidence>
<evidence type="ECO:0000269" key="7">
    <source>
    </source>
</evidence>
<evidence type="ECO:0000303" key="8">
    <source>
    </source>
</evidence>
<evidence type="ECO:0000303" key="9">
    <source>
    </source>
</evidence>
<evidence type="ECO:0000305" key="10"/>
<evidence type="ECO:0000305" key="11">
    <source>
    </source>
</evidence>
<keyword id="KW-0007">Acetylation</keyword>
<keyword id="KW-0106">Calcium</keyword>
<keyword id="KW-0903">Direct protein sequencing</keyword>
<keyword id="KW-0256">Endoplasmic reticulum</keyword>
<keyword id="KW-0349">Heme</keyword>
<keyword id="KW-0408">Iron</keyword>
<keyword id="KW-1017">Isopeptide bond</keyword>
<keyword id="KW-0551">Lipid droplet</keyword>
<keyword id="KW-0472">Membrane</keyword>
<keyword id="KW-0479">Metal-binding</keyword>
<keyword id="KW-0492">Microsome</keyword>
<keyword id="KW-0560">Oxidoreductase</keyword>
<keyword id="KW-1185">Reference proteome</keyword>
<keyword id="KW-0832">Ubl conjugation</keyword>
<dbReference type="EC" id="1.11.2.3"/>
<dbReference type="EMBL" id="AF109921">
    <property type="protein sequence ID" value="AAF13743.1"/>
    <property type="molecule type" value="mRNA"/>
</dbReference>
<dbReference type="RefSeq" id="NP_001291323.1">
    <property type="nucleotide sequence ID" value="NM_001304394.1"/>
</dbReference>
<dbReference type="FunCoup" id="Q9SQ57">
    <property type="interactions" value="71"/>
</dbReference>
<dbReference type="iPTMnet" id="Q9SQ57"/>
<dbReference type="EnsemblPlants" id="SIN_1002815.t">
    <property type="protein sequence ID" value="SIN_1002815.t"/>
    <property type="gene ID" value="SIN_1002815"/>
</dbReference>
<dbReference type="GeneID" id="105171741"/>
<dbReference type="Gramene" id="SIN_1002815.t">
    <property type="protein sequence ID" value="SIN_1002815.t"/>
    <property type="gene ID" value="SIN_1002815"/>
</dbReference>
<dbReference type="KEGG" id="sind:105171741"/>
<dbReference type="InParanoid" id="Q9SQ57"/>
<dbReference type="OrthoDB" id="640742at2759"/>
<dbReference type="PhylomeDB" id="Q9SQ57"/>
<dbReference type="Proteomes" id="UP000504604">
    <property type="component" value="Linkage group LG10"/>
</dbReference>
<dbReference type="GO" id="GO:0005783">
    <property type="term" value="C:endoplasmic reticulum"/>
    <property type="evidence" value="ECO:0007669"/>
    <property type="project" value="UniProtKB-KW"/>
</dbReference>
<dbReference type="GO" id="GO:0016020">
    <property type="term" value="C:membrane"/>
    <property type="evidence" value="ECO:0007669"/>
    <property type="project" value="UniProtKB-KW"/>
</dbReference>
<dbReference type="GO" id="GO:0012511">
    <property type="term" value="C:monolayer-surrounded lipid storage body"/>
    <property type="evidence" value="ECO:0000314"/>
    <property type="project" value="UniProtKB"/>
</dbReference>
<dbReference type="GO" id="GO:0005509">
    <property type="term" value="F:calcium ion binding"/>
    <property type="evidence" value="ECO:0000314"/>
    <property type="project" value="UniProtKB"/>
</dbReference>
<dbReference type="GO" id="GO:0004497">
    <property type="term" value="F:monooxygenase activity"/>
    <property type="evidence" value="ECO:0007669"/>
    <property type="project" value="TreeGrafter"/>
</dbReference>
<dbReference type="GO" id="GO:1990137">
    <property type="term" value="F:plant seed peroxygenase activity"/>
    <property type="evidence" value="ECO:0007669"/>
    <property type="project" value="UniProtKB-EC"/>
</dbReference>
<dbReference type="GO" id="GO:0010431">
    <property type="term" value="P:seed maturation"/>
    <property type="evidence" value="ECO:0000270"/>
    <property type="project" value="UniProtKB"/>
</dbReference>
<dbReference type="InterPro" id="IPR007736">
    <property type="entry name" value="Caleosin-related"/>
</dbReference>
<dbReference type="PANTHER" id="PTHR31495:SF50">
    <property type="entry name" value="PEROXYGENASE 1"/>
    <property type="match status" value="1"/>
</dbReference>
<dbReference type="PANTHER" id="PTHR31495">
    <property type="entry name" value="PEROXYGENASE 3-RELATED"/>
    <property type="match status" value="1"/>
</dbReference>
<dbReference type="Pfam" id="PF05042">
    <property type="entry name" value="Caleosin"/>
    <property type="match status" value="1"/>
</dbReference>
<comment type="function">
    <text evidence="1 3">Calcium-binding peroxygenase involved in the degradation of storage lipid in oil bodies. May be involved in the interaction between oil bodies and vacuoles during seed germination (By similarity).</text>
</comment>
<comment type="catalytic activity">
    <reaction>
        <text>RH + ROOH = ROH + ROH.</text>
        <dbReference type="EC" id="1.11.2.3"/>
    </reaction>
</comment>
<comment type="cofactor">
    <cofactor evidence="1">
        <name>heme b</name>
        <dbReference type="ChEBI" id="CHEBI:60344"/>
    </cofactor>
    <text evidence="1">Binds 1 heme b (iron(II)-protoporphyrin IX) group.</text>
</comment>
<comment type="cofactor">
    <cofactor>
        <name>Ca(2+)</name>
        <dbReference type="ChEBI" id="CHEBI:29108"/>
    </cofactor>
</comment>
<comment type="subunit">
    <text evidence="1">Homodimer.</text>
</comment>
<comment type="subcellular location">
    <subcellularLocation>
        <location evidence="3 5 7">Lipid droplet</location>
    </subcellularLocation>
    <subcellularLocation>
        <location evidence="3">Microsome membrane</location>
    </subcellularLocation>
</comment>
<comment type="tissue specificity">
    <text evidence="5 7">Expressed in seeds (at protein level) (PubMed:18632804, PubMed:9816677). Not expressed in stem, leaf or root (at protein level) (PubMed:9816677).</text>
</comment>
<comment type="developmental stage">
    <text evidence="3 6 7">Expressed during seed maturation (PubMed:10589521, PubMed:21041098, PubMed:9816677). Expression begins at 18 days after flowering (at protein level) (PubMed:9816677). Expressed in maturing seeds 2 weeks after flowering (PubMed:10589521). Decreases gradually after germination (PubMed:21041098).</text>
</comment>
<comment type="domain">
    <text>Transmembrane regions are predicted by sequence analysis tools, but these regions probably constitute hydrophobic domains associated to phospholipids.</text>
</comment>
<comment type="domain">
    <text evidence="11">The proline-knot motif may be involved in targeting to lipid bodies.</text>
</comment>
<comment type="similarity">
    <text evidence="10">Belongs to the caleosin family.</text>
</comment>
<reference key="1">
    <citation type="journal article" date="1999" name="Plant Cell Physiol.">
        <title>Cloning and secondary structure analysis of caleosin, a unique calcium-binding protein in oil bodies of plant seeds.</title>
        <authorList>
            <person name="Chen J.C."/>
            <person name="Tsai C.C."/>
            <person name="Tzen J.T."/>
        </authorList>
    </citation>
    <scope>NUCLEOTIDE SEQUENCE [MRNA]</scope>
    <scope>FUNCTION</scope>
    <scope>CALCIUM-BINDING</scope>
    <scope>PROTEIN SEQUENCE OF 44-58 AND 169-182</scope>
    <scope>SUBCELLULAR LOCATION</scope>
    <scope>DEVELOPMENTAL STAGE</scope>
</reference>
<reference key="2">
    <citation type="journal article" date="2005" name="Plant Physiol. Biochem.">
        <title>Determination and analyses of the N-termini of oil-body proteins, steroleosin, caleosin and oleosin.</title>
        <authorList>
            <person name="Lin L.J."/>
            <person name="Liao P.C."/>
            <person name="Yang H.H."/>
            <person name="Tzen J.T."/>
        </authorList>
    </citation>
    <scope>PROTEIN SEQUENCE OF N-TERMINUS</scope>
    <scope>ACETYLATION AT ALA-2</scope>
</reference>
<reference key="3">
    <citation type="journal article" date="2008" name="Plant Cell Physiol.">
        <title>A unique caleosin in oil bodies of lily pollen.</title>
        <authorList>
            <person name="Jiang P.L."/>
            <person name="Jauh G.Y."/>
            <person name="Wang C.S."/>
            <person name="Tzen J.T."/>
        </authorList>
    </citation>
    <scope>PROTEIN SEQUENCE OF 141-153; 166-173 AND 211-218</scope>
    <scope>SUBCELLULAR LOCATION</scope>
    <scope>TISSUE SPECIFICITY</scope>
    <scope>IDENTIFICATION BY MASS SPECTROMETRY</scope>
    <source>
        <tissue evidence="8">Seed</tissue>
    </source>
</reference>
<reference key="4">
    <citation type="journal article" date="1998" name="Plant Cell Physiol.">
        <title>Identification of three novel unique proteins in seed oil bodies of sesame.</title>
        <authorList>
            <person name="Chen E.C."/>
            <person name="Tai S.S."/>
            <person name="Peng C.C."/>
            <person name="Tzen J.T."/>
        </authorList>
    </citation>
    <scope>GENE NAME</scope>
    <scope>SUBCELLULAR LOCATION</scope>
    <scope>TISSUE SPECIFICITY</scope>
    <scope>DEVELOPMENTAL STAGE</scope>
</reference>
<reference key="5">
    <citation type="journal article" date="2011" name="Plant Physiol. Biochem.">
        <title>Ubiquitination of oleosin-H and caleosin in sesame oil bodies after seed germination.</title>
        <authorList>
            <person name="Hsiao E.S."/>
            <person name="Tzen J.T."/>
        </authorList>
    </citation>
    <scope>UBIQUITINATION AT LYS-165 AND LYS-235</scope>
    <scope>DEVELOPMENTAL STAGE</scope>
</reference>
<proteinExistence type="evidence at protein level"/>
<sequence length="245" mass="27636">MATHVLAAAAERNAALAPDAPLAPVTMERPVRTDLETSIPKPYMARGLVAPDMDHPNGTPGHVHDNLSVLQQHCAFFDQDDNGIIYPWETYSGLRQIGFNVIASLIMAIVINVALSYPTLPGWIPSPFFPIYLYNIHKAKHGSDSGTYDTEGRYLPMNFENLFSKHARTMPDRLTLGELWSMTEANREAFDIFGWIASKMEWTLLYILARDQDGFLSKEAIRRCYDGSLFEYCAKMQRGAEDKMK</sequence>
<name>PXG_SESIN</name>
<accession>Q9SQ57</accession>
<organism>
    <name type="scientific">Sesamum indicum</name>
    <name type="common">Oriental sesame</name>
    <name type="synonym">Sesamum orientale</name>
    <dbReference type="NCBI Taxonomy" id="4182"/>
    <lineage>
        <taxon>Eukaryota</taxon>
        <taxon>Viridiplantae</taxon>
        <taxon>Streptophyta</taxon>
        <taxon>Embryophyta</taxon>
        <taxon>Tracheophyta</taxon>
        <taxon>Spermatophyta</taxon>
        <taxon>Magnoliopsida</taxon>
        <taxon>eudicotyledons</taxon>
        <taxon>Gunneridae</taxon>
        <taxon>Pentapetalae</taxon>
        <taxon>asterids</taxon>
        <taxon>lamiids</taxon>
        <taxon>Lamiales</taxon>
        <taxon>Pedaliaceae</taxon>
        <taxon>Sesamum</taxon>
    </lineage>
</organism>
<feature type="initiator methionine" description="Removed" evidence="4">
    <location>
        <position position="1"/>
    </location>
</feature>
<feature type="chain" id="PRO_0000415560" description="Peroxygenase">
    <location>
        <begin position="2"/>
        <end position="245"/>
    </location>
</feature>
<feature type="domain" description="EF-hand">
    <location>
        <begin position="65"/>
        <end position="100"/>
    </location>
</feature>
<feature type="short sequence motif" description="Proline-knot" evidence="11">
    <location>
        <begin position="121"/>
        <end position="130"/>
    </location>
</feature>
<feature type="binding site" description="axial binding residue" evidence="1">
    <location>
        <position position="73"/>
    </location>
    <ligand>
        <name>heme</name>
        <dbReference type="ChEBI" id="CHEBI:30413"/>
    </ligand>
    <ligandPart>
        <name>Fe</name>
        <dbReference type="ChEBI" id="CHEBI:18248"/>
    </ligandPart>
</feature>
<feature type="binding site" evidence="2">
    <location>
        <position position="78"/>
    </location>
    <ligand>
        <name>Ca(2+)</name>
        <dbReference type="ChEBI" id="CHEBI:29108"/>
    </ligand>
</feature>
<feature type="binding site" evidence="2">
    <location>
        <position position="80"/>
    </location>
    <ligand>
        <name>Ca(2+)</name>
        <dbReference type="ChEBI" id="CHEBI:29108"/>
    </ligand>
</feature>
<feature type="binding site" evidence="2">
    <location>
        <position position="82"/>
    </location>
    <ligand>
        <name>Ca(2+)</name>
        <dbReference type="ChEBI" id="CHEBI:29108"/>
    </ligand>
</feature>
<feature type="binding site" evidence="2">
    <location>
        <position position="89"/>
    </location>
    <ligand>
        <name>Ca(2+)</name>
        <dbReference type="ChEBI" id="CHEBI:29108"/>
    </ligand>
</feature>
<feature type="modified residue" description="N-acetylalanine" evidence="4">
    <location>
        <position position="2"/>
    </location>
</feature>
<feature type="cross-link" description="Glycyl lysine isopeptide (Lys-Gly) (interchain with G-Cter in ubiquitin)" evidence="6">
    <location>
        <position position="165"/>
    </location>
</feature>
<feature type="cross-link" description="Glycyl lysine isopeptide (Lys-Gly) (interchain with G-Cter in ubiquitin)" evidence="6">
    <location>
        <position position="235"/>
    </location>
</feature>